<accession>Q6C0C4</accession>
<comment type="function">
    <text evidence="1">Core component of nucleosome. Nucleosomes wrap and compact DNA into chromatin, limiting DNA accessibility to the cellular machineries which require DNA as a template. Histones thereby play a central role in transcription regulation, DNA repair, DNA replication and chromosomal stability. DNA accessibility is regulated via a complex set of post-translational modifications of histones, also called histone code, and nucleosome remodeling (By similarity).</text>
</comment>
<comment type="subunit">
    <text evidence="1">The nucleosome is a histone octamer containing two molecules each of H2A, H2B, H3 and H4 assembled in one H3-H4 heterotetramer and two H2A-H2B heterodimers. The octamer wraps approximately 147 bp of DNA (By similarity).</text>
</comment>
<comment type="subcellular location">
    <subcellularLocation>
        <location evidence="1">Nucleus</location>
    </subcellularLocation>
    <subcellularLocation>
        <location evidence="1">Chromosome</location>
    </subcellularLocation>
</comment>
<comment type="PTM">
    <text evidence="1">Mono-, di- and trimethylated by the COMPASS complex to form H3K4me1/2/3. H3K4me activates gene expression by regulating transcription elongation and plays a role in telomere length maintenance. H3K4me enrichment correlates with transcription levels, and occurs in a 5' to 3' gradient with H3K4me3 enrichment at the 5'-end of genes, shifting to H3K4me2 and then H3K4me1. Methylated by SET2 to form H3K36me. H3K36me represses gene expression. Methylated by DOT1 to form H3K79me. H3K79me is required for association of SIR proteins with telomeric regions and for telomeric silencing. The COMPASS-mediated formation of H3K4me2/3 and the DOT1-mediated formation of H3K79me require H2BK123ub1 (By similarity).</text>
</comment>
<comment type="PTM">
    <text evidence="1">Acetylation of histone H3 leads to transcriptional activation. Acetylated by GCN5 to form H3K14ac. H3K14ac can also be formed by ESA1. H3K56ac formation occurs predominantly in newly synthesized H3 molecules during G1, S and G2/M of the cell cycle and may be involved in DNA repair (By similarity).</text>
</comment>
<comment type="similarity">
    <text evidence="3">Belongs to the histone H3 family.</text>
</comment>
<comment type="caution">
    <text evidence="3">To ensure consistency between histone entries, we follow the 'Brno' nomenclature for histone modifications, with positions referring to those used in the literature for the 'closest' model organism. Due to slight variations in histone sequences between organisms and to the presence of initiator methionine in UniProtKB/Swiss-Prot sequences, the actual positions of modified amino acids in the sequence generally differ. In this entry the following conventions are used: H3K4me1/2/3 = mono-, di- and trimethylated Lys-5; H3K9ac = acetylated Lys-12; H3K9me1 = monomethylated Lys-12; H3K14ac = acetylated Lys-17; H3K14me2 = dimethylated Lys-17; H3K18ac = acetylated Lys-21; H3K18me1 = monomethylated Lys-21; H3K23ac = acetylated Lys-26; H3K23me1 = monomethylated Lys-26; H3K27ac = acetylated Lys-30; H3K27me1/2/3 = mono-, di- and trimethylated Lys-30; H3K36ac = acetylated Lys-40; H3K36me1/2/3 = mono-, di- and trimethylated Lys-40; H3K56ac = acetylated Lys-62; H3K64ac = acetylated Lys-70; H3K79me1/2/3 = mono-, di- and trimethylated Lys-85.</text>
</comment>
<sequence length="139" mass="15611">MARTKSTVIARKVTGGKAPRKQIGSKAARKSAAPSNTSGGVKKPHRYKPGTVALREIRRYQKSTELLIRKLPFQRLVREIAQDFKTDLRFQSSAIGALQESVEAYLVSLFEDTNLCAIHAKRVTIQKKDIHLARRLRGE</sequence>
<feature type="initiator methionine" description="Removed" evidence="1">
    <location>
        <position position="1"/>
    </location>
</feature>
<feature type="chain" id="PRO_0000297755" description="Histone H3">
    <location>
        <begin position="2"/>
        <end position="139"/>
    </location>
</feature>
<feature type="region of interest" description="Disordered" evidence="2">
    <location>
        <begin position="1"/>
        <end position="48"/>
    </location>
</feature>
<feature type="modified residue" description="N6,N6,N6-trimethyllysine; alternate" evidence="1">
    <location>
        <position position="5"/>
    </location>
</feature>
<feature type="modified residue" description="N6,N6-dimethyllysine; alternate" evidence="1">
    <location>
        <position position="5"/>
    </location>
</feature>
<feature type="modified residue" description="N6-methyllysine; alternate" evidence="1">
    <location>
        <position position="5"/>
    </location>
</feature>
<feature type="modified residue" description="N6-acetyllysine; alternate" evidence="1">
    <location>
        <position position="12"/>
    </location>
</feature>
<feature type="modified residue" description="N6-methyllysine; alternate" evidence="1">
    <location>
        <position position="12"/>
    </location>
</feature>
<feature type="modified residue" description="N6,N6-dimethyllysine; alternate" evidence="1">
    <location>
        <position position="17"/>
    </location>
</feature>
<feature type="modified residue" description="N6-acetyllysine; alternate" evidence="1">
    <location>
        <position position="17"/>
    </location>
</feature>
<feature type="modified residue" description="N6-acetyllysine; alternate" evidence="1">
    <location>
        <position position="21"/>
    </location>
</feature>
<feature type="modified residue" description="N6-methyllysine; alternate" evidence="1">
    <location>
        <position position="21"/>
    </location>
</feature>
<feature type="modified residue" description="N6-acetyllysine; alternate" evidence="1">
    <location>
        <position position="26"/>
    </location>
</feature>
<feature type="modified residue" description="N6-methyllysine; alternate" evidence="1">
    <location>
        <position position="26"/>
    </location>
</feature>
<feature type="modified residue" description="N6,N6,N6-trimethyllysine; alternate" evidence="1">
    <location>
        <position position="30"/>
    </location>
</feature>
<feature type="modified residue" description="N6,N6-dimethyllysine; alternate" evidence="1">
    <location>
        <position position="30"/>
    </location>
</feature>
<feature type="modified residue" description="N6-acetyllysine; alternate" evidence="1">
    <location>
        <position position="30"/>
    </location>
</feature>
<feature type="modified residue" description="N6-methyllysine; alternate" evidence="1">
    <location>
        <position position="30"/>
    </location>
</feature>
<feature type="modified residue" description="N6,N6,N6-trimethyllysine; alternate" evidence="1">
    <location>
        <position position="42"/>
    </location>
</feature>
<feature type="modified residue" description="N6,N6-dimethyllysine; alternate" evidence="1">
    <location>
        <position position="42"/>
    </location>
</feature>
<feature type="modified residue" description="N6-acetyllysine; alternate" evidence="1">
    <location>
        <position position="42"/>
    </location>
</feature>
<feature type="modified residue" description="N6-methyllysine; alternate" evidence="1">
    <location>
        <position position="42"/>
    </location>
</feature>
<feature type="modified residue" description="N6-acetyllysine" evidence="1">
    <location>
        <position position="62"/>
    </location>
</feature>
<feature type="modified residue" description="N6-acetyllysine" evidence="1">
    <location>
        <position position="70"/>
    </location>
</feature>
<feature type="modified residue" description="N6,N6,N6-trimethyllysine; alternate" evidence="1">
    <location>
        <position position="85"/>
    </location>
</feature>
<feature type="modified residue" description="N6,N6-dimethyllysine; alternate" evidence="1">
    <location>
        <position position="85"/>
    </location>
</feature>
<feature type="modified residue" description="N6-methyllysine; alternate" evidence="1">
    <location>
        <position position="85"/>
    </location>
</feature>
<organism>
    <name type="scientific">Yarrowia lipolytica (strain CLIB 122 / E 150)</name>
    <name type="common">Yeast</name>
    <name type="synonym">Candida lipolytica</name>
    <dbReference type="NCBI Taxonomy" id="284591"/>
    <lineage>
        <taxon>Eukaryota</taxon>
        <taxon>Fungi</taxon>
        <taxon>Dikarya</taxon>
        <taxon>Ascomycota</taxon>
        <taxon>Saccharomycotina</taxon>
        <taxon>Dipodascomycetes</taxon>
        <taxon>Dipodascales</taxon>
        <taxon>Dipodascales incertae sedis</taxon>
        <taxon>Yarrowia</taxon>
    </lineage>
</organism>
<protein>
    <recommendedName>
        <fullName>Histone H3</fullName>
    </recommendedName>
</protein>
<name>H3_YARLI</name>
<dbReference type="EMBL" id="CR382132">
    <property type="protein sequence ID" value="CAG78699.1"/>
    <property type="molecule type" value="Genomic_DNA"/>
</dbReference>
<dbReference type="RefSeq" id="XP_505888.1">
    <property type="nucleotide sequence ID" value="XM_505888.1"/>
</dbReference>
<dbReference type="SMR" id="Q6C0C4"/>
<dbReference type="FunCoup" id="Q6C0C4">
    <property type="interactions" value="913"/>
</dbReference>
<dbReference type="STRING" id="284591.Q6C0C4"/>
<dbReference type="EnsemblFungi" id="CAG78699">
    <property type="protein sequence ID" value="CAG78699"/>
    <property type="gene ID" value="YALI0_F25905g"/>
</dbReference>
<dbReference type="KEGG" id="yli:2907691"/>
<dbReference type="VEuPathDB" id="FungiDB:YALI0_F25905g"/>
<dbReference type="HOGENOM" id="CLU_078295_4_0_1"/>
<dbReference type="InParanoid" id="Q6C0C4"/>
<dbReference type="OMA" id="HIFAEMA"/>
<dbReference type="OrthoDB" id="108752at4891"/>
<dbReference type="Proteomes" id="UP000001300">
    <property type="component" value="Chromosome F"/>
</dbReference>
<dbReference type="GO" id="GO:0000786">
    <property type="term" value="C:nucleosome"/>
    <property type="evidence" value="ECO:0007669"/>
    <property type="project" value="UniProtKB-KW"/>
</dbReference>
<dbReference type="GO" id="GO:0005634">
    <property type="term" value="C:nucleus"/>
    <property type="evidence" value="ECO:0000318"/>
    <property type="project" value="GO_Central"/>
</dbReference>
<dbReference type="GO" id="GO:0003677">
    <property type="term" value="F:DNA binding"/>
    <property type="evidence" value="ECO:0007669"/>
    <property type="project" value="UniProtKB-KW"/>
</dbReference>
<dbReference type="GO" id="GO:0046982">
    <property type="term" value="F:protein heterodimerization activity"/>
    <property type="evidence" value="ECO:0007669"/>
    <property type="project" value="InterPro"/>
</dbReference>
<dbReference type="GO" id="GO:0030527">
    <property type="term" value="F:structural constituent of chromatin"/>
    <property type="evidence" value="ECO:0007669"/>
    <property type="project" value="InterPro"/>
</dbReference>
<dbReference type="GO" id="GO:0009303">
    <property type="term" value="P:rRNA transcription"/>
    <property type="evidence" value="ECO:0000318"/>
    <property type="project" value="GO_Central"/>
</dbReference>
<dbReference type="CDD" id="cd22911">
    <property type="entry name" value="HFD_H3"/>
    <property type="match status" value="1"/>
</dbReference>
<dbReference type="FunFam" id="1.10.20.10:FF:000010">
    <property type="entry name" value="Histone H3"/>
    <property type="match status" value="1"/>
</dbReference>
<dbReference type="Gene3D" id="1.10.20.10">
    <property type="entry name" value="Histone, subunit A"/>
    <property type="match status" value="1"/>
</dbReference>
<dbReference type="InterPro" id="IPR009072">
    <property type="entry name" value="Histone-fold"/>
</dbReference>
<dbReference type="InterPro" id="IPR007125">
    <property type="entry name" value="Histone_H2A/H2B/H3"/>
</dbReference>
<dbReference type="InterPro" id="IPR000164">
    <property type="entry name" value="Histone_H3/CENP-A"/>
</dbReference>
<dbReference type="PANTHER" id="PTHR11426">
    <property type="entry name" value="HISTONE H3"/>
    <property type="match status" value="1"/>
</dbReference>
<dbReference type="Pfam" id="PF00125">
    <property type="entry name" value="Histone"/>
    <property type="match status" value="1"/>
</dbReference>
<dbReference type="PRINTS" id="PR00622">
    <property type="entry name" value="HISTONEH3"/>
</dbReference>
<dbReference type="SMART" id="SM00428">
    <property type="entry name" value="H3"/>
    <property type="match status" value="1"/>
</dbReference>
<dbReference type="SUPFAM" id="SSF47113">
    <property type="entry name" value="Histone-fold"/>
    <property type="match status" value="1"/>
</dbReference>
<dbReference type="PROSITE" id="PS00322">
    <property type="entry name" value="HISTONE_H3_1"/>
    <property type="match status" value="1"/>
</dbReference>
<dbReference type="PROSITE" id="PS00959">
    <property type="entry name" value="HISTONE_H3_2"/>
    <property type="match status" value="1"/>
</dbReference>
<evidence type="ECO:0000250" key="1"/>
<evidence type="ECO:0000256" key="2">
    <source>
        <dbReference type="SAM" id="MobiDB-lite"/>
    </source>
</evidence>
<evidence type="ECO:0000305" key="3"/>
<proteinExistence type="inferred from homology"/>
<keyword id="KW-0007">Acetylation</keyword>
<keyword id="KW-0158">Chromosome</keyword>
<keyword id="KW-0238">DNA-binding</keyword>
<keyword id="KW-0488">Methylation</keyword>
<keyword id="KW-0544">Nucleosome core</keyword>
<keyword id="KW-0539">Nucleus</keyword>
<keyword id="KW-1185">Reference proteome</keyword>
<reference key="1">
    <citation type="journal article" date="2004" name="Nature">
        <title>Genome evolution in yeasts.</title>
        <authorList>
            <person name="Dujon B."/>
            <person name="Sherman D."/>
            <person name="Fischer G."/>
            <person name="Durrens P."/>
            <person name="Casaregola S."/>
            <person name="Lafontaine I."/>
            <person name="de Montigny J."/>
            <person name="Marck C."/>
            <person name="Neuveglise C."/>
            <person name="Talla E."/>
            <person name="Goffard N."/>
            <person name="Frangeul L."/>
            <person name="Aigle M."/>
            <person name="Anthouard V."/>
            <person name="Babour A."/>
            <person name="Barbe V."/>
            <person name="Barnay S."/>
            <person name="Blanchin S."/>
            <person name="Beckerich J.-M."/>
            <person name="Beyne E."/>
            <person name="Bleykasten C."/>
            <person name="Boisrame A."/>
            <person name="Boyer J."/>
            <person name="Cattolico L."/>
            <person name="Confanioleri F."/>
            <person name="de Daruvar A."/>
            <person name="Despons L."/>
            <person name="Fabre E."/>
            <person name="Fairhead C."/>
            <person name="Ferry-Dumazet H."/>
            <person name="Groppi A."/>
            <person name="Hantraye F."/>
            <person name="Hennequin C."/>
            <person name="Jauniaux N."/>
            <person name="Joyet P."/>
            <person name="Kachouri R."/>
            <person name="Kerrest A."/>
            <person name="Koszul R."/>
            <person name="Lemaire M."/>
            <person name="Lesur I."/>
            <person name="Ma L."/>
            <person name="Muller H."/>
            <person name="Nicaud J.-M."/>
            <person name="Nikolski M."/>
            <person name="Oztas S."/>
            <person name="Ozier-Kalogeropoulos O."/>
            <person name="Pellenz S."/>
            <person name="Potier S."/>
            <person name="Richard G.-F."/>
            <person name="Straub M.-L."/>
            <person name="Suleau A."/>
            <person name="Swennen D."/>
            <person name="Tekaia F."/>
            <person name="Wesolowski-Louvel M."/>
            <person name="Westhof E."/>
            <person name="Wirth B."/>
            <person name="Zeniou-Meyer M."/>
            <person name="Zivanovic Y."/>
            <person name="Bolotin-Fukuhara M."/>
            <person name="Thierry A."/>
            <person name="Bouchier C."/>
            <person name="Caudron B."/>
            <person name="Scarpelli C."/>
            <person name="Gaillardin C."/>
            <person name="Weissenbach J."/>
            <person name="Wincker P."/>
            <person name="Souciet J.-L."/>
        </authorList>
    </citation>
    <scope>NUCLEOTIDE SEQUENCE [LARGE SCALE GENOMIC DNA]</scope>
    <source>
        <strain>CLIB 122 / E 150</strain>
    </source>
</reference>
<gene>
    <name type="primary">HHT1</name>
    <name type="ordered locus">YALI0F25905g</name>
</gene>